<gene>
    <name type="ordered locus">HI_1657</name>
</gene>
<organism>
    <name type="scientific">Haemophilus influenzae (strain ATCC 51907 / DSM 11121 / KW20 / Rd)</name>
    <dbReference type="NCBI Taxonomy" id="71421"/>
    <lineage>
        <taxon>Bacteria</taxon>
        <taxon>Pseudomonadati</taxon>
        <taxon>Pseudomonadota</taxon>
        <taxon>Gammaproteobacteria</taxon>
        <taxon>Pasteurellales</taxon>
        <taxon>Pasteurellaceae</taxon>
        <taxon>Haemophilus</taxon>
    </lineage>
</organism>
<comment type="similarity">
    <text evidence="2">Belongs to the SIS family. DiaA subfamily.</text>
</comment>
<sequence length="194" mass="21025">MLQKVKDIYSESIQIQIAASSMLSENITNATQMVMQCLLGGNKVIACGVSRSYANAQFLVSNLLNRYDLVRPSFPSVLLSLESAVGSSLVFEQPPEELYCHQFNASAKSGDLLIAFAPLGTEKIVLNIISHAVSKEVNVIVLTGSNNDAIQGILADKDLEISIPATKESRILENHLFVINALCELVDQTLFPSA</sequence>
<protein>
    <recommendedName>
        <fullName>Uncharacterized protein HI_1657</fullName>
    </recommendedName>
</protein>
<proteinExistence type="inferred from homology"/>
<keyword id="KW-1185">Reference proteome</keyword>
<name>Y1657_HAEIN</name>
<accession>P52606</accession>
<reference key="1">
    <citation type="journal article" date="1995" name="Science">
        <title>Whole-genome random sequencing and assembly of Haemophilus influenzae Rd.</title>
        <authorList>
            <person name="Fleischmann R.D."/>
            <person name="Adams M.D."/>
            <person name="White O."/>
            <person name="Clayton R.A."/>
            <person name="Kirkness E.F."/>
            <person name="Kerlavage A.R."/>
            <person name="Bult C.J."/>
            <person name="Tomb J.-F."/>
            <person name="Dougherty B.A."/>
            <person name="Merrick J.M."/>
            <person name="McKenney K."/>
            <person name="Sutton G.G."/>
            <person name="FitzHugh W."/>
            <person name="Fields C.A."/>
            <person name="Gocayne J.D."/>
            <person name="Scott J.D."/>
            <person name="Shirley R."/>
            <person name="Liu L.-I."/>
            <person name="Glodek A."/>
            <person name="Kelley J.M."/>
            <person name="Weidman J.F."/>
            <person name="Phillips C.A."/>
            <person name="Spriggs T."/>
            <person name="Hedblom E."/>
            <person name="Cotton M.D."/>
            <person name="Utterback T.R."/>
            <person name="Hanna M.C."/>
            <person name="Nguyen D.T."/>
            <person name="Saudek D.M."/>
            <person name="Brandon R.C."/>
            <person name="Fine L.D."/>
            <person name="Fritchman J.L."/>
            <person name="Fuhrmann J.L."/>
            <person name="Geoghagen N.S.M."/>
            <person name="Gnehm C.L."/>
            <person name="McDonald L.A."/>
            <person name="Small K.V."/>
            <person name="Fraser C.M."/>
            <person name="Smith H.O."/>
            <person name="Venter J.C."/>
        </authorList>
    </citation>
    <scope>NUCLEOTIDE SEQUENCE [LARGE SCALE GENOMIC DNA]</scope>
    <source>
        <strain>ATCC 51907 / DSM 11121 / KW20 / Rd</strain>
    </source>
</reference>
<reference key="2">
    <citation type="submission" date="1996-09" db="EMBL/GenBank/DDBJ databases">
        <authorList>
            <person name="White O."/>
            <person name="Clayton R.A."/>
            <person name="Kerlavage A.R."/>
            <person name="Fleischmann R.D."/>
        </authorList>
    </citation>
    <scope>SEQUENCE REVISION</scope>
</reference>
<dbReference type="EMBL" id="L42023">
    <property type="protein sequence ID" value="AAC23301.1"/>
    <property type="molecule type" value="Genomic_DNA"/>
</dbReference>
<dbReference type="RefSeq" id="NP_439799.1">
    <property type="nucleotide sequence ID" value="NC_000907.1"/>
</dbReference>
<dbReference type="SMR" id="P52606"/>
<dbReference type="STRING" id="71421.HI_1657"/>
<dbReference type="EnsemblBacteria" id="AAC23301">
    <property type="protein sequence ID" value="AAC23301"/>
    <property type="gene ID" value="HI_1657"/>
</dbReference>
<dbReference type="KEGG" id="hin:HI_1657"/>
<dbReference type="PATRIC" id="fig|71421.8.peg.1735"/>
<dbReference type="eggNOG" id="COG0279">
    <property type="taxonomic scope" value="Bacteria"/>
</dbReference>
<dbReference type="HOGENOM" id="CLU_080999_3_1_6"/>
<dbReference type="OrthoDB" id="9810929at2"/>
<dbReference type="PhylomeDB" id="P52606"/>
<dbReference type="BioCyc" id="HINF71421:G1GJ1-1674-MONOMER"/>
<dbReference type="Proteomes" id="UP000000579">
    <property type="component" value="Chromosome"/>
</dbReference>
<dbReference type="GO" id="GO:1990102">
    <property type="term" value="C:DnaA-DiaA complex"/>
    <property type="evidence" value="ECO:0000318"/>
    <property type="project" value="GO_Central"/>
</dbReference>
<dbReference type="GO" id="GO:0097367">
    <property type="term" value="F:carbohydrate derivative binding"/>
    <property type="evidence" value="ECO:0007669"/>
    <property type="project" value="InterPro"/>
</dbReference>
<dbReference type="GO" id="GO:1901135">
    <property type="term" value="P:carbohydrate derivative metabolic process"/>
    <property type="evidence" value="ECO:0007669"/>
    <property type="project" value="InterPro"/>
</dbReference>
<dbReference type="GO" id="GO:0032298">
    <property type="term" value="P:positive regulation of DNA-templated DNA replication initiation"/>
    <property type="evidence" value="ECO:0000318"/>
    <property type="project" value="GO_Central"/>
</dbReference>
<dbReference type="CDD" id="cd05006">
    <property type="entry name" value="SIS_GmhA"/>
    <property type="match status" value="1"/>
</dbReference>
<dbReference type="Gene3D" id="3.40.50.10490">
    <property type="entry name" value="Glucose-6-phosphate isomerase like protein, domain 1"/>
    <property type="match status" value="1"/>
</dbReference>
<dbReference type="InterPro" id="IPR035461">
    <property type="entry name" value="GmhA/DiaA"/>
</dbReference>
<dbReference type="InterPro" id="IPR001347">
    <property type="entry name" value="SIS_dom"/>
</dbReference>
<dbReference type="InterPro" id="IPR046348">
    <property type="entry name" value="SIS_dom_sf"/>
</dbReference>
<dbReference type="InterPro" id="IPR050099">
    <property type="entry name" value="SIS_GmhA/DiaA_subfam"/>
</dbReference>
<dbReference type="PANTHER" id="PTHR30390:SF6">
    <property type="entry name" value="DNAA INITIATOR-ASSOCIATING PROTEIN DIAA"/>
    <property type="match status" value="1"/>
</dbReference>
<dbReference type="PANTHER" id="PTHR30390">
    <property type="entry name" value="SEDOHEPTULOSE 7-PHOSPHATE ISOMERASE / DNAA INITIATOR-ASSOCIATING FACTOR FOR REPLICATION INITIATION"/>
    <property type="match status" value="1"/>
</dbReference>
<dbReference type="Pfam" id="PF13580">
    <property type="entry name" value="SIS_2"/>
    <property type="match status" value="1"/>
</dbReference>
<dbReference type="SUPFAM" id="SSF53697">
    <property type="entry name" value="SIS domain"/>
    <property type="match status" value="1"/>
</dbReference>
<dbReference type="PROSITE" id="PS51464">
    <property type="entry name" value="SIS"/>
    <property type="match status" value="1"/>
</dbReference>
<feature type="chain" id="PRO_0000136565" description="Uncharacterized protein HI_1657">
    <location>
        <begin position="1"/>
        <end position="194"/>
    </location>
</feature>
<feature type="domain" description="SIS" evidence="1">
    <location>
        <begin position="34"/>
        <end position="192"/>
    </location>
</feature>
<evidence type="ECO:0000255" key="1">
    <source>
        <dbReference type="PROSITE-ProRule" id="PRU00797"/>
    </source>
</evidence>
<evidence type="ECO:0000305" key="2"/>